<evidence type="ECO:0000255" key="1">
    <source>
        <dbReference type="HAMAP-Rule" id="MF_00183"/>
    </source>
</evidence>
<sequence length="366" mass="41137">MVVLGSTGSIGVNTLEIARRYDIEIEGLVAGNNYEVLNAQIKEFKPKYVVVKDLKTAEKIDFPNVKYGEEAVLDMIEKSKSDLIVNALVGDAGLRPTLKAQECGKKIALANKESLVNAGKFIDTSKITPIDSEHFGLWYLLIEKCRVKSEKCNVKKLYITASGGALRDWSLEDIKKATLKDVLKHPNWSMGVKITIDSATMVNKLFELLEAKWLFDTDKIDAFIETKSIIHALVEWQDGSTTAHISKTDMKLPIAFAVLDEVNDEILSPVNLLEVGGLEFRKIEVEKYPVWEIKDLLLIKPDLGVVVNTANEFAIEKFLEERISFIDISGIILKAVQKFENVNINGIDDVFEIKNEVRKWCESNFV</sequence>
<dbReference type="EC" id="1.1.1.267" evidence="1"/>
<dbReference type="EMBL" id="CP001279">
    <property type="protein sequence ID" value="ACM93267.1"/>
    <property type="molecule type" value="Genomic_DNA"/>
</dbReference>
<dbReference type="RefSeq" id="WP_015902319.1">
    <property type="nucleotide sequence ID" value="NC_012115.1"/>
</dbReference>
<dbReference type="SMR" id="B9L7Q2"/>
<dbReference type="STRING" id="598659.NAMH_0236"/>
<dbReference type="KEGG" id="nam:NAMH_0236"/>
<dbReference type="eggNOG" id="COG0743">
    <property type="taxonomic scope" value="Bacteria"/>
</dbReference>
<dbReference type="HOGENOM" id="CLU_035714_0_1_7"/>
<dbReference type="OrthoDB" id="9806546at2"/>
<dbReference type="UniPathway" id="UPA00056">
    <property type="reaction ID" value="UER00092"/>
</dbReference>
<dbReference type="Proteomes" id="UP000000448">
    <property type="component" value="Chromosome"/>
</dbReference>
<dbReference type="GO" id="GO:0030604">
    <property type="term" value="F:1-deoxy-D-xylulose-5-phosphate reductoisomerase activity"/>
    <property type="evidence" value="ECO:0007669"/>
    <property type="project" value="UniProtKB-UniRule"/>
</dbReference>
<dbReference type="GO" id="GO:0030145">
    <property type="term" value="F:manganese ion binding"/>
    <property type="evidence" value="ECO:0007669"/>
    <property type="project" value="TreeGrafter"/>
</dbReference>
<dbReference type="GO" id="GO:0070402">
    <property type="term" value="F:NADPH binding"/>
    <property type="evidence" value="ECO:0007669"/>
    <property type="project" value="InterPro"/>
</dbReference>
<dbReference type="GO" id="GO:0051484">
    <property type="term" value="P:isopentenyl diphosphate biosynthetic process, methylerythritol 4-phosphate pathway involved in terpenoid biosynthetic process"/>
    <property type="evidence" value="ECO:0007669"/>
    <property type="project" value="TreeGrafter"/>
</dbReference>
<dbReference type="Gene3D" id="1.10.1740.10">
    <property type="match status" value="1"/>
</dbReference>
<dbReference type="Gene3D" id="3.40.50.720">
    <property type="entry name" value="NAD(P)-binding Rossmann-like Domain"/>
    <property type="match status" value="1"/>
</dbReference>
<dbReference type="HAMAP" id="MF_00183">
    <property type="entry name" value="DXP_reductoisom"/>
    <property type="match status" value="1"/>
</dbReference>
<dbReference type="InterPro" id="IPR003821">
    <property type="entry name" value="DXP_reductoisomerase"/>
</dbReference>
<dbReference type="InterPro" id="IPR013644">
    <property type="entry name" value="DXP_reductoisomerase_C"/>
</dbReference>
<dbReference type="InterPro" id="IPR013512">
    <property type="entry name" value="DXP_reductoisomerase_N"/>
</dbReference>
<dbReference type="InterPro" id="IPR026877">
    <property type="entry name" value="DXPR_C"/>
</dbReference>
<dbReference type="InterPro" id="IPR036169">
    <property type="entry name" value="DXPR_C_sf"/>
</dbReference>
<dbReference type="InterPro" id="IPR036291">
    <property type="entry name" value="NAD(P)-bd_dom_sf"/>
</dbReference>
<dbReference type="NCBIfam" id="TIGR00243">
    <property type="entry name" value="Dxr"/>
    <property type="match status" value="1"/>
</dbReference>
<dbReference type="PANTHER" id="PTHR30525">
    <property type="entry name" value="1-DEOXY-D-XYLULOSE 5-PHOSPHATE REDUCTOISOMERASE"/>
    <property type="match status" value="1"/>
</dbReference>
<dbReference type="PANTHER" id="PTHR30525:SF0">
    <property type="entry name" value="1-DEOXY-D-XYLULOSE 5-PHOSPHATE REDUCTOISOMERASE, CHLOROPLASTIC"/>
    <property type="match status" value="1"/>
</dbReference>
<dbReference type="Pfam" id="PF08436">
    <property type="entry name" value="DXP_redisom_C"/>
    <property type="match status" value="1"/>
</dbReference>
<dbReference type="Pfam" id="PF02670">
    <property type="entry name" value="DXP_reductoisom"/>
    <property type="match status" value="1"/>
</dbReference>
<dbReference type="Pfam" id="PF13288">
    <property type="entry name" value="DXPR_C"/>
    <property type="match status" value="1"/>
</dbReference>
<dbReference type="PIRSF" id="PIRSF006205">
    <property type="entry name" value="Dxp_reductismrs"/>
    <property type="match status" value="1"/>
</dbReference>
<dbReference type="SUPFAM" id="SSF69055">
    <property type="entry name" value="1-deoxy-D-xylulose-5-phosphate reductoisomerase, C-terminal domain"/>
    <property type="match status" value="1"/>
</dbReference>
<dbReference type="SUPFAM" id="SSF55347">
    <property type="entry name" value="Glyceraldehyde-3-phosphate dehydrogenase-like, C-terminal domain"/>
    <property type="match status" value="1"/>
</dbReference>
<dbReference type="SUPFAM" id="SSF51735">
    <property type="entry name" value="NAD(P)-binding Rossmann-fold domains"/>
    <property type="match status" value="1"/>
</dbReference>
<reference key="1">
    <citation type="journal article" date="2009" name="PLoS Genet.">
        <title>Adaptations to submarine hydrothermal environments exemplified by the genome of Nautilia profundicola.</title>
        <authorList>
            <person name="Campbell B.J."/>
            <person name="Smith J.L."/>
            <person name="Hanson T.E."/>
            <person name="Klotz M.G."/>
            <person name="Stein L.Y."/>
            <person name="Lee C.K."/>
            <person name="Wu D."/>
            <person name="Robinson J.M."/>
            <person name="Khouri H.M."/>
            <person name="Eisen J.A."/>
            <person name="Cary S.C."/>
        </authorList>
    </citation>
    <scope>NUCLEOTIDE SEQUENCE [LARGE SCALE GENOMIC DNA]</scope>
    <source>
        <strain>ATCC BAA-1463 / DSM 18972 / AmH</strain>
    </source>
</reference>
<proteinExistence type="inferred from homology"/>
<comment type="function">
    <text evidence="1">Catalyzes the NADPH-dependent rearrangement and reduction of 1-deoxy-D-xylulose-5-phosphate (DXP) to 2-C-methyl-D-erythritol 4-phosphate (MEP).</text>
</comment>
<comment type="catalytic activity">
    <reaction evidence="1">
        <text>2-C-methyl-D-erythritol 4-phosphate + NADP(+) = 1-deoxy-D-xylulose 5-phosphate + NADPH + H(+)</text>
        <dbReference type="Rhea" id="RHEA:13717"/>
        <dbReference type="ChEBI" id="CHEBI:15378"/>
        <dbReference type="ChEBI" id="CHEBI:57783"/>
        <dbReference type="ChEBI" id="CHEBI:57792"/>
        <dbReference type="ChEBI" id="CHEBI:58262"/>
        <dbReference type="ChEBI" id="CHEBI:58349"/>
        <dbReference type="EC" id="1.1.1.267"/>
    </reaction>
    <physiologicalReaction direction="right-to-left" evidence="1">
        <dbReference type="Rhea" id="RHEA:13719"/>
    </physiologicalReaction>
</comment>
<comment type="cofactor">
    <cofactor evidence="1">
        <name>Mg(2+)</name>
        <dbReference type="ChEBI" id="CHEBI:18420"/>
    </cofactor>
    <cofactor evidence="1">
        <name>Mn(2+)</name>
        <dbReference type="ChEBI" id="CHEBI:29035"/>
    </cofactor>
</comment>
<comment type="pathway">
    <text evidence="1">Isoprenoid biosynthesis; isopentenyl diphosphate biosynthesis via DXP pathway; isopentenyl diphosphate from 1-deoxy-D-xylulose 5-phosphate: step 1/6.</text>
</comment>
<comment type="similarity">
    <text evidence="1">Belongs to the DXR family.</text>
</comment>
<name>DXR_NAUPA</name>
<organism>
    <name type="scientific">Nautilia profundicola (strain ATCC BAA-1463 / DSM 18972 / AmH)</name>
    <dbReference type="NCBI Taxonomy" id="598659"/>
    <lineage>
        <taxon>Bacteria</taxon>
        <taxon>Pseudomonadati</taxon>
        <taxon>Campylobacterota</taxon>
        <taxon>Epsilonproteobacteria</taxon>
        <taxon>Nautiliales</taxon>
        <taxon>Nautiliaceae</taxon>
        <taxon>Nautilia</taxon>
    </lineage>
</organism>
<gene>
    <name evidence="1" type="primary">dxr</name>
    <name type="ordered locus">NAMH_0236</name>
</gene>
<accession>B9L7Q2</accession>
<feature type="chain" id="PRO_1000124103" description="1-deoxy-D-xylulose 5-phosphate reductoisomerase">
    <location>
        <begin position="1"/>
        <end position="366"/>
    </location>
</feature>
<feature type="binding site" evidence="1">
    <location>
        <position position="7"/>
    </location>
    <ligand>
        <name>NADPH</name>
        <dbReference type="ChEBI" id="CHEBI:57783"/>
    </ligand>
</feature>
<feature type="binding site" evidence="1">
    <location>
        <position position="8"/>
    </location>
    <ligand>
        <name>NADPH</name>
        <dbReference type="ChEBI" id="CHEBI:57783"/>
    </ligand>
</feature>
<feature type="binding site" evidence="1">
    <location>
        <position position="9"/>
    </location>
    <ligand>
        <name>NADPH</name>
        <dbReference type="ChEBI" id="CHEBI:57783"/>
    </ligand>
</feature>
<feature type="binding site" evidence="1">
    <location>
        <position position="10"/>
    </location>
    <ligand>
        <name>NADPH</name>
        <dbReference type="ChEBI" id="CHEBI:57783"/>
    </ligand>
</feature>
<feature type="binding site" evidence="1">
    <location>
        <position position="31"/>
    </location>
    <ligand>
        <name>NADPH</name>
        <dbReference type="ChEBI" id="CHEBI:57783"/>
    </ligand>
</feature>
<feature type="binding site" evidence="1">
    <location>
        <position position="33"/>
    </location>
    <ligand>
        <name>NADPH</name>
        <dbReference type="ChEBI" id="CHEBI:57783"/>
    </ligand>
</feature>
<feature type="binding site" evidence="1">
    <location>
        <position position="111"/>
    </location>
    <ligand>
        <name>NADPH</name>
        <dbReference type="ChEBI" id="CHEBI:57783"/>
    </ligand>
</feature>
<feature type="binding site" evidence="1">
    <location>
        <position position="112"/>
    </location>
    <ligand>
        <name>1-deoxy-D-xylulose 5-phosphate</name>
        <dbReference type="ChEBI" id="CHEBI:57792"/>
    </ligand>
</feature>
<feature type="binding site" evidence="1">
    <location>
        <position position="113"/>
    </location>
    <ligand>
        <name>NADPH</name>
        <dbReference type="ChEBI" id="CHEBI:57783"/>
    </ligand>
</feature>
<feature type="binding site" evidence="1">
    <location>
        <position position="131"/>
    </location>
    <ligand>
        <name>Mn(2+)</name>
        <dbReference type="ChEBI" id="CHEBI:29035"/>
    </ligand>
</feature>
<feature type="binding site" evidence="1">
    <location>
        <position position="132"/>
    </location>
    <ligand>
        <name>1-deoxy-D-xylulose 5-phosphate</name>
        <dbReference type="ChEBI" id="CHEBI:57792"/>
    </ligand>
</feature>
<feature type="binding site" evidence="1">
    <location>
        <position position="133"/>
    </location>
    <ligand>
        <name>1-deoxy-D-xylulose 5-phosphate</name>
        <dbReference type="ChEBI" id="CHEBI:57792"/>
    </ligand>
</feature>
<feature type="binding site" evidence="1">
    <location>
        <position position="133"/>
    </location>
    <ligand>
        <name>Mn(2+)</name>
        <dbReference type="ChEBI" id="CHEBI:29035"/>
    </ligand>
</feature>
<feature type="binding site" evidence="1">
    <location>
        <position position="162"/>
    </location>
    <ligand>
        <name>1-deoxy-D-xylulose 5-phosphate</name>
        <dbReference type="ChEBI" id="CHEBI:57792"/>
    </ligand>
</feature>
<feature type="binding site" evidence="1">
    <location>
        <position position="185"/>
    </location>
    <ligand>
        <name>1-deoxy-D-xylulose 5-phosphate</name>
        <dbReference type="ChEBI" id="CHEBI:57792"/>
    </ligand>
</feature>
<feature type="binding site" evidence="1">
    <location>
        <position position="191"/>
    </location>
    <ligand>
        <name>NADPH</name>
        <dbReference type="ChEBI" id="CHEBI:57783"/>
    </ligand>
</feature>
<feature type="binding site" evidence="1">
    <location>
        <position position="198"/>
    </location>
    <ligand>
        <name>1-deoxy-D-xylulose 5-phosphate</name>
        <dbReference type="ChEBI" id="CHEBI:57792"/>
    </ligand>
</feature>
<feature type="binding site" evidence="1">
    <location>
        <position position="203"/>
    </location>
    <ligand>
        <name>1-deoxy-D-xylulose 5-phosphate</name>
        <dbReference type="ChEBI" id="CHEBI:57792"/>
    </ligand>
</feature>
<feature type="binding site" evidence="1">
    <location>
        <position position="204"/>
    </location>
    <ligand>
        <name>1-deoxy-D-xylulose 5-phosphate</name>
        <dbReference type="ChEBI" id="CHEBI:57792"/>
    </ligand>
</feature>
<feature type="binding site" evidence="1">
    <location>
        <position position="207"/>
    </location>
    <ligand>
        <name>1-deoxy-D-xylulose 5-phosphate</name>
        <dbReference type="ChEBI" id="CHEBI:57792"/>
    </ligand>
</feature>
<feature type="binding site" evidence="1">
    <location>
        <position position="207"/>
    </location>
    <ligand>
        <name>Mn(2+)</name>
        <dbReference type="ChEBI" id="CHEBI:29035"/>
    </ligand>
</feature>
<protein>
    <recommendedName>
        <fullName evidence="1">1-deoxy-D-xylulose 5-phosphate reductoisomerase</fullName>
        <shortName evidence="1">DXP reductoisomerase</shortName>
        <ecNumber evidence="1">1.1.1.267</ecNumber>
    </recommendedName>
    <alternativeName>
        <fullName evidence="1">1-deoxyxylulose-5-phosphate reductoisomerase</fullName>
    </alternativeName>
    <alternativeName>
        <fullName evidence="1">2-C-methyl-D-erythritol 4-phosphate synthase</fullName>
    </alternativeName>
</protein>
<keyword id="KW-0414">Isoprene biosynthesis</keyword>
<keyword id="KW-0464">Manganese</keyword>
<keyword id="KW-0479">Metal-binding</keyword>
<keyword id="KW-0521">NADP</keyword>
<keyword id="KW-0560">Oxidoreductase</keyword>